<organism>
    <name type="scientific">Rattus norvegicus</name>
    <name type="common">Rat</name>
    <dbReference type="NCBI Taxonomy" id="10116"/>
    <lineage>
        <taxon>Eukaryota</taxon>
        <taxon>Metazoa</taxon>
        <taxon>Chordata</taxon>
        <taxon>Craniata</taxon>
        <taxon>Vertebrata</taxon>
        <taxon>Euteleostomi</taxon>
        <taxon>Mammalia</taxon>
        <taxon>Eutheria</taxon>
        <taxon>Euarchontoglires</taxon>
        <taxon>Glires</taxon>
        <taxon>Rodentia</taxon>
        <taxon>Myomorpha</taxon>
        <taxon>Muroidea</taxon>
        <taxon>Muridae</taxon>
        <taxon>Murinae</taxon>
        <taxon>Rattus</taxon>
    </lineage>
</organism>
<accession>P29826</accession>
<protein>
    <recommendedName>
        <fullName>Rano class II histocompatibility antigen, B-1 beta chain</fullName>
    </recommendedName>
    <alternativeName>
        <fullName>RT1 class II histocompatibility antigen, B-1 beta chain</fullName>
    </alternativeName>
    <alternativeName>
        <fullName>RT1.B-beta(1)</fullName>
    </alternativeName>
</protein>
<comment type="function">
    <text>Involved in the presentation of foreign antigens to the immune system.</text>
</comment>
<comment type="subcellular location">
    <subcellularLocation>
        <location evidence="4">Membrane</location>
        <topology evidence="4">Single-pass type I membrane protein</topology>
    </subcellularLocation>
</comment>
<comment type="similarity">
    <text evidence="4">Belongs to the MHC class II family.</text>
</comment>
<keyword id="KW-0002">3D-structure</keyword>
<keyword id="KW-1064">Adaptive immunity</keyword>
<keyword id="KW-1015">Disulfide bond</keyword>
<keyword id="KW-0325">Glycoprotein</keyword>
<keyword id="KW-0391">Immunity</keyword>
<keyword id="KW-1017">Isopeptide bond</keyword>
<keyword id="KW-0472">Membrane</keyword>
<keyword id="KW-0491">MHC II</keyword>
<keyword id="KW-1185">Reference proteome</keyword>
<keyword id="KW-0732">Signal</keyword>
<keyword id="KW-0812">Transmembrane</keyword>
<keyword id="KW-1133">Transmembrane helix</keyword>
<keyword id="KW-0832">Ubl conjugation</keyword>
<evidence type="ECO:0000250" key="1">
    <source>
        <dbReference type="UniProtKB" id="P13762"/>
    </source>
</evidence>
<evidence type="ECO:0000255" key="2"/>
<evidence type="ECO:0000255" key="3">
    <source>
        <dbReference type="PROSITE-ProRule" id="PRU00114"/>
    </source>
</evidence>
<evidence type="ECO:0000305" key="4"/>
<sequence length="263" mass="29935">MALQTPSFLLPAAVVVLMVLSSPGTEGRDSPRDFVYQFKGLCYYTNGTQRIRDVIRYIYNQEEYLRYDSDVGEYRALTELGRPSAEYFNKQYLEQTRAELDTVCRHNYEGSEVRTSLRRLEQPNVAISLSRTEALNHHNLLVCSVTDFYPAQIKVRWFRNGQEETAGVVSTQLIRNGDWTFQILVMLEMTPQRGEVYICHVDHPSLESPVTVEWRAQSESAQSKMLSGIGGFVLGVIFLGLGLFIRHKRQKGPRGPPPAGLLQ</sequence>
<feature type="signal peptide" evidence="2">
    <location>
        <begin position="1"/>
        <end position="27"/>
    </location>
</feature>
<feature type="chain" id="PRO_0000019005" description="Rano class II histocompatibility antigen, B-1 beta chain">
    <location>
        <begin position="28"/>
        <end position="263"/>
    </location>
</feature>
<feature type="topological domain" description="Extracellular" evidence="2">
    <location>
        <begin position="28"/>
        <end position="224"/>
    </location>
</feature>
<feature type="transmembrane region" description="Helical" evidence="2">
    <location>
        <begin position="225"/>
        <end position="245"/>
    </location>
</feature>
<feature type="topological domain" description="Cytoplasmic" evidence="2">
    <location>
        <begin position="246"/>
        <end position="263"/>
    </location>
</feature>
<feature type="domain" description="Ig-like C1-type">
    <location>
        <begin position="123"/>
        <end position="211"/>
    </location>
</feature>
<feature type="region of interest" description="Beta-1">
    <location>
        <begin position="28"/>
        <end position="120"/>
    </location>
</feature>
<feature type="region of interest" description="Beta-2">
    <location>
        <begin position="121"/>
        <end position="214"/>
    </location>
</feature>
<feature type="region of interest" description="Connecting peptide">
    <location>
        <begin position="215"/>
        <end position="224"/>
    </location>
</feature>
<feature type="glycosylation site" description="N-linked (GlcNAc...) asparagine" evidence="2">
    <location>
        <position position="46"/>
    </location>
</feature>
<feature type="disulfide bond" evidence="3">
    <location>
        <begin position="42"/>
        <end position="104"/>
    </location>
</feature>
<feature type="disulfide bond" evidence="3">
    <location>
        <begin position="143"/>
        <end position="199"/>
    </location>
</feature>
<feature type="cross-link" description="Glycyl lysine isopeptide (Lys-Gly) (interchain with G-Cter in ubiquitin)" evidence="1">
    <location>
        <position position="251"/>
    </location>
</feature>
<reference key="1">
    <citation type="journal article" date="1991" name="Biochim. Biophys. Acta">
        <title>Complete coding nucleotide sequence of cDNA for the class II RT1.B beta I chain of the Lewis rat.</title>
        <authorList>
            <person name="Syha-Jedelhauser J."/>
            <person name="Wendling U."/>
            <person name="Reske K."/>
        </authorList>
    </citation>
    <scope>NUCLEOTIDE SEQUENCE [MRNA]</scope>
    <source>
        <strain>Lewis</strain>
        <tissue>Bone marrow</tissue>
    </source>
</reference>
<gene>
    <name type="primary">RT1-Bb</name>
</gene>
<dbReference type="EMBL" id="X56596">
    <property type="protein sequence ID" value="CAA39934.1"/>
    <property type="molecule type" value="mRNA"/>
</dbReference>
<dbReference type="PIR" id="S16999">
    <property type="entry name" value="HLRTBB"/>
</dbReference>
<dbReference type="PDB" id="6NF7">
    <property type="method" value="X-ray"/>
    <property type="resolution" value="2.90 A"/>
    <property type="chains" value="C/F/I/L/O=64-75"/>
</dbReference>
<dbReference type="PDBsum" id="6NF7"/>
<dbReference type="SMR" id="P29826"/>
<dbReference type="FunCoup" id="P29826">
    <property type="interactions" value="68"/>
</dbReference>
<dbReference type="STRING" id="10116.ENSRNOP00000000525"/>
<dbReference type="GlyCosmos" id="P29826">
    <property type="glycosylation" value="1 site, No reported glycans"/>
</dbReference>
<dbReference type="GlyGen" id="P29826">
    <property type="glycosylation" value="1 site"/>
</dbReference>
<dbReference type="PaxDb" id="10116-ENSRNOP00000000525"/>
<dbReference type="UCSC" id="RGD:3469">
    <property type="organism name" value="rat"/>
</dbReference>
<dbReference type="AGR" id="RGD:3469"/>
<dbReference type="RGD" id="3469">
    <property type="gene designation" value="RT1-Bb"/>
</dbReference>
<dbReference type="eggNOG" id="ENOG502RYBQ">
    <property type="taxonomic scope" value="Eukaryota"/>
</dbReference>
<dbReference type="InParanoid" id="P29826"/>
<dbReference type="PhylomeDB" id="P29826"/>
<dbReference type="Reactome" id="R-RNO-202424">
    <property type="pathway name" value="Downstream TCR signaling"/>
</dbReference>
<dbReference type="Reactome" id="R-RNO-202427">
    <property type="pathway name" value="Phosphorylation of CD3 and TCR zeta chains"/>
</dbReference>
<dbReference type="Reactome" id="R-RNO-202430">
    <property type="pathway name" value="Translocation of ZAP-70 to Immunological synapse"/>
</dbReference>
<dbReference type="Reactome" id="R-RNO-202433">
    <property type="pathway name" value="Generation of second messenger molecules"/>
</dbReference>
<dbReference type="Reactome" id="R-RNO-2132295">
    <property type="pathway name" value="MHC class II antigen presentation"/>
</dbReference>
<dbReference type="Reactome" id="R-RNO-389948">
    <property type="pathway name" value="Co-inhibition by PD-1"/>
</dbReference>
<dbReference type="PRO" id="PR:P29826"/>
<dbReference type="Proteomes" id="UP000002494">
    <property type="component" value="Unplaced"/>
</dbReference>
<dbReference type="GO" id="GO:0009986">
    <property type="term" value="C:cell surface"/>
    <property type="evidence" value="ECO:0000314"/>
    <property type="project" value="RGD"/>
</dbReference>
<dbReference type="GO" id="GO:0005769">
    <property type="term" value="C:early endosome"/>
    <property type="evidence" value="ECO:0000266"/>
    <property type="project" value="RGD"/>
</dbReference>
<dbReference type="GO" id="GO:0009897">
    <property type="term" value="C:external side of plasma membrane"/>
    <property type="evidence" value="ECO:0000266"/>
    <property type="project" value="RGD"/>
</dbReference>
<dbReference type="GO" id="GO:0005794">
    <property type="term" value="C:Golgi apparatus"/>
    <property type="evidence" value="ECO:0000266"/>
    <property type="project" value="RGD"/>
</dbReference>
<dbReference type="GO" id="GO:0031902">
    <property type="term" value="C:late endosome membrane"/>
    <property type="evidence" value="ECO:0000318"/>
    <property type="project" value="GO_Central"/>
</dbReference>
<dbReference type="GO" id="GO:0005765">
    <property type="term" value="C:lysosomal membrane"/>
    <property type="evidence" value="ECO:0000318"/>
    <property type="project" value="GO_Central"/>
</dbReference>
<dbReference type="GO" id="GO:0016020">
    <property type="term" value="C:membrane"/>
    <property type="evidence" value="ECO:0000266"/>
    <property type="project" value="RGD"/>
</dbReference>
<dbReference type="GO" id="GO:0042613">
    <property type="term" value="C:MHC class II protein complex"/>
    <property type="evidence" value="ECO:0000266"/>
    <property type="project" value="RGD"/>
</dbReference>
<dbReference type="GO" id="GO:0005771">
    <property type="term" value="C:multivesicular body"/>
    <property type="evidence" value="ECO:0000266"/>
    <property type="project" value="RGD"/>
</dbReference>
<dbReference type="GO" id="GO:0005886">
    <property type="term" value="C:plasma membrane"/>
    <property type="evidence" value="ECO:0000266"/>
    <property type="project" value="RGD"/>
</dbReference>
<dbReference type="GO" id="GO:0023026">
    <property type="term" value="F:MHC class II protein complex binding"/>
    <property type="evidence" value="ECO:0000318"/>
    <property type="project" value="GO_Central"/>
</dbReference>
<dbReference type="GO" id="GO:0042605">
    <property type="term" value="F:peptide antigen binding"/>
    <property type="evidence" value="ECO:0000266"/>
    <property type="project" value="RGD"/>
</dbReference>
<dbReference type="GO" id="GO:0044877">
    <property type="term" value="F:protein-containing complex binding"/>
    <property type="evidence" value="ECO:0000314"/>
    <property type="project" value="RGD"/>
</dbReference>
<dbReference type="GO" id="GO:0002250">
    <property type="term" value="P:adaptive immune response"/>
    <property type="evidence" value="ECO:0007669"/>
    <property type="project" value="UniProtKB-KW"/>
</dbReference>
<dbReference type="GO" id="GO:0019882">
    <property type="term" value="P:antigen processing and presentation"/>
    <property type="evidence" value="ECO:0000266"/>
    <property type="project" value="RGD"/>
</dbReference>
<dbReference type="GO" id="GO:0019886">
    <property type="term" value="P:antigen processing and presentation of exogenous peptide antigen via MHC class II"/>
    <property type="evidence" value="ECO:0000266"/>
    <property type="project" value="RGD"/>
</dbReference>
<dbReference type="GO" id="GO:0048002">
    <property type="term" value="P:antigen processing and presentation of peptide antigen"/>
    <property type="evidence" value="ECO:0000266"/>
    <property type="project" value="RGD"/>
</dbReference>
<dbReference type="GO" id="GO:0071549">
    <property type="term" value="P:cellular response to dexamethasone stimulus"/>
    <property type="evidence" value="ECO:0000270"/>
    <property type="project" value="RGD"/>
</dbReference>
<dbReference type="GO" id="GO:0071385">
    <property type="term" value="P:cellular response to glucocorticoid stimulus"/>
    <property type="evidence" value="ECO:0000270"/>
    <property type="project" value="RGD"/>
</dbReference>
<dbReference type="GO" id="GO:0071315">
    <property type="term" value="P:cellular response to morphine"/>
    <property type="evidence" value="ECO:0000270"/>
    <property type="project" value="RGD"/>
</dbReference>
<dbReference type="GO" id="GO:0050832">
    <property type="term" value="P:defense response to fungus"/>
    <property type="evidence" value="ECO:0000270"/>
    <property type="project" value="RGD"/>
</dbReference>
<dbReference type="GO" id="GO:0006959">
    <property type="term" value="P:humoral immune response"/>
    <property type="evidence" value="ECO:0000266"/>
    <property type="project" value="RGD"/>
</dbReference>
<dbReference type="GO" id="GO:0006955">
    <property type="term" value="P:immune response"/>
    <property type="evidence" value="ECO:0000266"/>
    <property type="project" value="RGD"/>
</dbReference>
<dbReference type="GO" id="GO:0042130">
    <property type="term" value="P:negative regulation of T cell proliferation"/>
    <property type="evidence" value="ECO:0000314"/>
    <property type="project" value="RGD"/>
</dbReference>
<dbReference type="GO" id="GO:0002503">
    <property type="term" value="P:peptide antigen assembly with MHC class II protein complex"/>
    <property type="evidence" value="ECO:0000318"/>
    <property type="project" value="GO_Central"/>
</dbReference>
<dbReference type="GO" id="GO:0050778">
    <property type="term" value="P:positive regulation of immune response"/>
    <property type="evidence" value="ECO:0000318"/>
    <property type="project" value="GO_Central"/>
</dbReference>
<dbReference type="GO" id="GO:0050870">
    <property type="term" value="P:positive regulation of T cell activation"/>
    <property type="evidence" value="ECO:0000318"/>
    <property type="project" value="GO_Central"/>
</dbReference>
<dbReference type="GO" id="GO:0050852">
    <property type="term" value="P:T cell receptor signaling pathway"/>
    <property type="evidence" value="ECO:0000266"/>
    <property type="project" value="RGD"/>
</dbReference>
<dbReference type="CDD" id="cd21001">
    <property type="entry name" value="IgC1_MHC_II_beta_HLA-DQ_I-A"/>
    <property type="match status" value="1"/>
</dbReference>
<dbReference type="FunFam" id="2.60.40.10:FF:000116">
    <property type="entry name" value="HLA class II histocompatibility antigen, DRB1-1 beta chain"/>
    <property type="match status" value="1"/>
</dbReference>
<dbReference type="FunFam" id="3.10.320.10:FF:000001">
    <property type="entry name" value="HLA class II histocompatibility antigen, DRB1-1 beta chain"/>
    <property type="match status" value="1"/>
</dbReference>
<dbReference type="Gene3D" id="3.10.320.10">
    <property type="entry name" value="Class II Histocompatibility Antigen, M Beta Chain, Chain B, domain 1"/>
    <property type="match status" value="1"/>
</dbReference>
<dbReference type="Gene3D" id="2.60.40.10">
    <property type="entry name" value="Immunoglobulins"/>
    <property type="match status" value="1"/>
</dbReference>
<dbReference type="InterPro" id="IPR007110">
    <property type="entry name" value="Ig-like_dom"/>
</dbReference>
<dbReference type="InterPro" id="IPR036179">
    <property type="entry name" value="Ig-like_dom_sf"/>
</dbReference>
<dbReference type="InterPro" id="IPR013783">
    <property type="entry name" value="Ig-like_fold"/>
</dbReference>
<dbReference type="InterPro" id="IPR003006">
    <property type="entry name" value="Ig/MHC_CS"/>
</dbReference>
<dbReference type="InterPro" id="IPR003597">
    <property type="entry name" value="Ig_C1-set"/>
</dbReference>
<dbReference type="InterPro" id="IPR050160">
    <property type="entry name" value="MHC/Immunoglobulin"/>
</dbReference>
<dbReference type="InterPro" id="IPR011162">
    <property type="entry name" value="MHC_I/II-like_Ag-recog"/>
</dbReference>
<dbReference type="InterPro" id="IPR014745">
    <property type="entry name" value="MHC_II_a/b_N"/>
</dbReference>
<dbReference type="InterPro" id="IPR000353">
    <property type="entry name" value="MHC_II_b_N"/>
</dbReference>
<dbReference type="PANTHER" id="PTHR19944:SF101">
    <property type="entry name" value="HLA CLASS II HISTOCOMPATIBILITY ANTIGEN, DQ BETA 1 CHAIN"/>
    <property type="match status" value="1"/>
</dbReference>
<dbReference type="PANTHER" id="PTHR19944">
    <property type="entry name" value="MHC CLASS II-RELATED"/>
    <property type="match status" value="1"/>
</dbReference>
<dbReference type="Pfam" id="PF07654">
    <property type="entry name" value="C1-set"/>
    <property type="match status" value="1"/>
</dbReference>
<dbReference type="Pfam" id="PF00969">
    <property type="entry name" value="MHC_II_beta"/>
    <property type="match status" value="1"/>
</dbReference>
<dbReference type="SMART" id="SM00407">
    <property type="entry name" value="IGc1"/>
    <property type="match status" value="1"/>
</dbReference>
<dbReference type="SMART" id="SM00921">
    <property type="entry name" value="MHC_II_beta"/>
    <property type="match status" value="1"/>
</dbReference>
<dbReference type="SUPFAM" id="SSF48726">
    <property type="entry name" value="Immunoglobulin"/>
    <property type="match status" value="1"/>
</dbReference>
<dbReference type="SUPFAM" id="SSF54452">
    <property type="entry name" value="MHC antigen-recognition domain"/>
    <property type="match status" value="1"/>
</dbReference>
<dbReference type="PROSITE" id="PS50835">
    <property type="entry name" value="IG_LIKE"/>
    <property type="match status" value="1"/>
</dbReference>
<dbReference type="PROSITE" id="PS00290">
    <property type="entry name" value="IG_MHC"/>
    <property type="match status" value="1"/>
</dbReference>
<proteinExistence type="evidence at protein level"/>
<name>HB2B_RAT</name>